<proteinExistence type="evidence at protein level"/>
<feature type="chain" id="PRO_0000429641" description="Cobalt-precorrin-5A hydrolase">
    <location>
        <begin position="1"/>
        <end position="374"/>
    </location>
</feature>
<keyword id="KW-0169">Cobalamin biosynthesis</keyword>
<keyword id="KW-0378">Hydrolase</keyword>
<organism>
    <name type="scientific">Priestia megaterium</name>
    <name type="common">Bacillus megaterium</name>
    <dbReference type="NCBI Taxonomy" id="1404"/>
    <lineage>
        <taxon>Bacteria</taxon>
        <taxon>Bacillati</taxon>
        <taxon>Bacillota</taxon>
        <taxon>Bacilli</taxon>
        <taxon>Bacillales</taxon>
        <taxon>Bacillaceae</taxon>
        <taxon>Priestia</taxon>
    </lineage>
</organism>
<accession>O87697</accession>
<gene>
    <name type="primary">cbiG</name>
</gene>
<comment type="function">
    <text evidence="1">Catalyzes the hydrolysis of the ring A acetate delta-lactone of cobalt-precorrin-5A resulting in the loss of the C-20 carbon and its attached methyl group in the form of acetaldehyde.</text>
</comment>
<comment type="catalytic activity">
    <reaction evidence="1">
        <text>Co-precorrin-5A + H2O = Co-precorrin-5B + acetaldehyde + H(+)</text>
        <dbReference type="Rhea" id="RHEA:26281"/>
        <dbReference type="ChEBI" id="CHEBI:15343"/>
        <dbReference type="ChEBI" id="CHEBI:15377"/>
        <dbReference type="ChEBI" id="CHEBI:15378"/>
        <dbReference type="ChEBI" id="CHEBI:60062"/>
        <dbReference type="ChEBI" id="CHEBI:60063"/>
        <dbReference type="EC" id="3.7.1.12"/>
    </reaction>
</comment>
<comment type="pathway">
    <text>Cofactor biosynthesis; adenosylcobalamin biosynthesis; cob(II)yrinate a,c-diamide from sirohydrochlorin (anaerobic route): step 5/10.</text>
</comment>
<comment type="similarity">
    <text evidence="2">Belongs to the CbiG family.</text>
</comment>
<evidence type="ECO:0000269" key="1">
    <source>
    </source>
</evidence>
<evidence type="ECO:0000305" key="2"/>
<sequence length="374" mass="41125">MIQLEEGKKAPITQRGDYAVVAITKHGVEIARNLGRIFQQSDVYYMSKFEKGDEQEQNIQMFSGSVRMLLPSLFESYKGLIIIISLGAVVRMIAPILKDKKTDPAVVVIDDKGENVISVLSGHIGGANELTREVAAALRAHPVITTASDVQKTIPVDLFGKRFGWVWESAENVTPVSASVVNEEEIAVVQESGEKSWWHYEHPVPANIKTYSSIQTALEASPHAALVVTHRDLKKEEEAILENGVLYRPKVLAIGMGCNRGTSAAEIETVIEKTLAELQFSMKSVKALCTIELKKDEEGLLEVASKYGWEFVYYSPQELNSISIQQPSDTVFKYTGAYGVSEPAAMLYSGADTLELVKKKSGNVTISVALIPYD</sequence>
<dbReference type="EC" id="3.7.1.12"/>
<dbReference type="EMBL" id="AJ000758">
    <property type="protein sequence ID" value="CAA04315.1"/>
    <property type="molecule type" value="Genomic_DNA"/>
</dbReference>
<dbReference type="PIR" id="T44691">
    <property type="entry name" value="T44691"/>
</dbReference>
<dbReference type="SMR" id="O87697"/>
<dbReference type="BRENDA" id="3.7.1.12">
    <property type="organism ID" value="656"/>
</dbReference>
<dbReference type="UniPathway" id="UPA00148">
    <property type="reaction ID" value="UER00561"/>
</dbReference>
<dbReference type="GO" id="GO:0043779">
    <property type="term" value="F:cobalt-precorrin-5A acetaldehyde-lyase activity"/>
    <property type="evidence" value="ECO:0007669"/>
    <property type="project" value="UniProtKB-EC"/>
</dbReference>
<dbReference type="GO" id="GO:0009236">
    <property type="term" value="P:cobalamin biosynthetic process"/>
    <property type="evidence" value="ECO:0007669"/>
    <property type="project" value="UniProtKB-UniPathway"/>
</dbReference>
<dbReference type="Gene3D" id="3.40.50.11220">
    <property type="match status" value="1"/>
</dbReference>
<dbReference type="Gene3D" id="3.30.420.180">
    <property type="entry name" value="CobE/GbiG C-terminal domain"/>
    <property type="match status" value="1"/>
</dbReference>
<dbReference type="InterPro" id="IPR052553">
    <property type="entry name" value="CbiG_hydrolase"/>
</dbReference>
<dbReference type="InterPro" id="IPR021745">
    <property type="entry name" value="CbiG_mid"/>
</dbReference>
<dbReference type="InterPro" id="IPR021744">
    <property type="entry name" value="CbiG_N"/>
</dbReference>
<dbReference type="InterPro" id="IPR002750">
    <property type="entry name" value="CobE/GbiG_C"/>
</dbReference>
<dbReference type="InterPro" id="IPR036518">
    <property type="entry name" value="CobE/GbiG_C_sf"/>
</dbReference>
<dbReference type="InterPro" id="IPR038029">
    <property type="entry name" value="GbiG_N_sf"/>
</dbReference>
<dbReference type="PANTHER" id="PTHR37477">
    <property type="entry name" value="COBALT-PRECORRIN-5A HYDROLASE"/>
    <property type="match status" value="1"/>
</dbReference>
<dbReference type="PANTHER" id="PTHR37477:SF1">
    <property type="entry name" value="COBALT-PRECORRIN-5A HYDROLASE"/>
    <property type="match status" value="1"/>
</dbReference>
<dbReference type="Pfam" id="PF01890">
    <property type="entry name" value="CbiG_C"/>
    <property type="match status" value="1"/>
</dbReference>
<dbReference type="Pfam" id="PF11761">
    <property type="entry name" value="CbiG_mid"/>
    <property type="match status" value="1"/>
</dbReference>
<dbReference type="Pfam" id="PF11760">
    <property type="entry name" value="CbiG_N"/>
    <property type="match status" value="1"/>
</dbReference>
<dbReference type="SUPFAM" id="SSF159672">
    <property type="entry name" value="CbiG N-terminal domain-like"/>
    <property type="match status" value="1"/>
</dbReference>
<dbReference type="SUPFAM" id="SSF159664">
    <property type="entry name" value="CobE/GbiG C-terminal domain-like"/>
    <property type="match status" value="1"/>
</dbReference>
<protein>
    <recommendedName>
        <fullName>Cobalt-precorrin-5A hydrolase</fullName>
        <ecNumber>3.7.1.12</ecNumber>
    </recommendedName>
</protein>
<reference key="1">
    <citation type="journal article" date="1998" name="Biochem. J.">
        <title>Cobalamin (vitamin B12) biosynthesis: identification and characterization of a Bacillus megaterium cobI operon.</title>
        <authorList>
            <person name="Raux E."/>
            <person name="Lanois A."/>
            <person name="Warren M.J."/>
            <person name="Rambach A."/>
            <person name="Thermes C."/>
        </authorList>
    </citation>
    <scope>NUCLEOTIDE SEQUENCE [GENOMIC DNA]</scope>
    <source>
        <strain>DSM 509 / CCM 1464 / NBRC 12109</strain>
    </source>
</reference>
<reference key="2">
    <citation type="journal article" date="2006" name="J. Am. Chem. Soc.">
        <title>Genetically engineered synthesis and structural characterization of cobalt-precorrin 5A and -5B, two new intermediates on the anaerobic pathway to vitamin B12: definition of the roles of the CbiF and CbiG enzymes.</title>
        <authorList>
            <person name="Kajiwara Y."/>
            <person name="Santander P.J."/>
            <person name="Roessner C.A."/>
            <person name="Perez L.M."/>
            <person name="Scott A.I."/>
        </authorList>
    </citation>
    <scope>FUNCTION</scope>
    <scope>CATALYTIC ACTIVITY</scope>
</reference>
<name>CBIG_PRIMG</name>